<evidence type="ECO:0000250" key="1">
    <source>
        <dbReference type="UniProtKB" id="P39210"/>
    </source>
</evidence>
<evidence type="ECO:0000255" key="2"/>
<evidence type="ECO:0000269" key="3">
    <source>
    </source>
</evidence>
<evidence type="ECO:0000269" key="4">
    <source>
    </source>
</evidence>
<evidence type="ECO:0000303" key="5">
    <source>
    </source>
</evidence>
<evidence type="ECO:0000303" key="6">
    <source>
    </source>
</evidence>
<evidence type="ECO:0000305" key="7"/>
<evidence type="ECO:0000312" key="8">
    <source>
        <dbReference type="FlyBase" id="FBgn0039930"/>
    </source>
</evidence>
<evidence type="ECO:0000312" key="9">
    <source>
        <dbReference type="Proteomes" id="UP000000803"/>
    </source>
</evidence>
<keyword id="KW-0472">Membrane</keyword>
<keyword id="KW-0496">Mitochondrion</keyword>
<keyword id="KW-0999">Mitochondrion inner membrane</keyword>
<keyword id="KW-1185">Reference proteome</keyword>
<keyword id="KW-0812">Transmembrane</keyword>
<keyword id="KW-1133">Transmembrane helix</keyword>
<gene>
    <name evidence="8" type="primary">Mpv17</name>
    <name evidence="8" type="ORF">CG11077</name>
</gene>
<feature type="chain" id="PRO_0000234404" description="Mitochondrial inner membrane protein Mpv17">
    <location>
        <begin position="1"/>
        <end position="168"/>
    </location>
</feature>
<feature type="transmembrane region" description="Helical" evidence="2">
    <location>
        <begin position="12"/>
        <end position="29"/>
    </location>
</feature>
<feature type="transmembrane region" description="Helical" evidence="2">
    <location>
        <begin position="41"/>
        <end position="61"/>
    </location>
</feature>
<feature type="transmembrane region" description="Helical" evidence="2">
    <location>
        <begin position="82"/>
        <end position="101"/>
    </location>
</feature>
<feature type="transmembrane region" description="Helical" evidence="2">
    <location>
        <begin position="144"/>
        <end position="166"/>
    </location>
</feature>
<feature type="site" description="Determines ion selectivity" evidence="1">
    <location>
        <position position="85"/>
    </location>
</feature>
<feature type="mutagenesis site" description="Decreased channel conductance." evidence="4">
    <original>R</original>
    <variation>Q</variation>
    <location>
        <position position="41"/>
    </location>
</feature>
<feature type="mutagenesis site" description="Prevents opening of the channel under physiological conditons." evidence="4">
    <original>S</original>
    <variation>F</variation>
    <location>
        <position position="163"/>
    </location>
</feature>
<proteinExistence type="evidence at protein level"/>
<dbReference type="EMBL" id="AE014135">
    <property type="protein sequence ID" value="AAF59393.1"/>
    <property type="molecule type" value="Genomic_DNA"/>
</dbReference>
<dbReference type="EMBL" id="AY071482">
    <property type="protein sequence ID" value="AAL49104.1"/>
    <property type="molecule type" value="mRNA"/>
</dbReference>
<dbReference type="RefSeq" id="NP_651944.1">
    <property type="nucleotide sequence ID" value="NM_143687.4"/>
</dbReference>
<dbReference type="BioGRID" id="68657">
    <property type="interactions" value="1"/>
</dbReference>
<dbReference type="FunCoup" id="Q9V492">
    <property type="interactions" value="406"/>
</dbReference>
<dbReference type="STRING" id="7227.FBpp0088286"/>
<dbReference type="PaxDb" id="7227-FBpp0088286"/>
<dbReference type="DNASU" id="43831"/>
<dbReference type="EnsemblMetazoa" id="FBtr0089222">
    <property type="protein sequence ID" value="FBpp0088286"/>
    <property type="gene ID" value="FBgn0039930"/>
</dbReference>
<dbReference type="GeneID" id="43831"/>
<dbReference type="KEGG" id="dme:Dmel_CG11077"/>
<dbReference type="UCSC" id="CG11077-RA">
    <property type="organism name" value="d. melanogaster"/>
</dbReference>
<dbReference type="AGR" id="FB:FBgn0039930"/>
<dbReference type="CTD" id="4358"/>
<dbReference type="FlyBase" id="FBgn0039930">
    <property type="gene designation" value="Mpv17"/>
</dbReference>
<dbReference type="VEuPathDB" id="VectorBase:FBgn0039930"/>
<dbReference type="eggNOG" id="KOG1944">
    <property type="taxonomic scope" value="Eukaryota"/>
</dbReference>
<dbReference type="GeneTree" id="ENSGT00940000160891"/>
<dbReference type="HOGENOM" id="CLU_049109_8_3_1"/>
<dbReference type="InParanoid" id="Q9V492"/>
<dbReference type="OMA" id="NCYLSMI"/>
<dbReference type="OrthoDB" id="430207at2759"/>
<dbReference type="PhylomeDB" id="Q9V492"/>
<dbReference type="Reactome" id="R-DME-9033241">
    <property type="pathway name" value="Peroxisomal protein import"/>
</dbReference>
<dbReference type="BioGRID-ORCS" id="43831">
    <property type="hits" value="0 hits in 1 CRISPR screen"/>
</dbReference>
<dbReference type="ChiTaRS" id="CG11077">
    <property type="organism name" value="fly"/>
</dbReference>
<dbReference type="GenomeRNAi" id="43831"/>
<dbReference type="PRO" id="PR:Q9V492"/>
<dbReference type="Proteomes" id="UP000000803">
    <property type="component" value="Chromosome 4"/>
</dbReference>
<dbReference type="Bgee" id="FBgn0039930">
    <property type="expression patterns" value="Expressed in adult enteroendocrine precursor cell in adult midgut (Drosophila) and 63 other cell types or tissues"/>
</dbReference>
<dbReference type="GO" id="GO:0005737">
    <property type="term" value="C:cytoplasm"/>
    <property type="evidence" value="ECO:0000318"/>
    <property type="project" value="GO_Central"/>
</dbReference>
<dbReference type="GO" id="GO:0005743">
    <property type="term" value="C:mitochondrial inner membrane"/>
    <property type="evidence" value="ECO:0000314"/>
    <property type="project" value="FlyBase"/>
</dbReference>
<dbReference type="GO" id="GO:0005739">
    <property type="term" value="C:mitochondrion"/>
    <property type="evidence" value="ECO:0000318"/>
    <property type="project" value="GO_Central"/>
</dbReference>
<dbReference type="GO" id="GO:0015267">
    <property type="term" value="F:channel activity"/>
    <property type="evidence" value="ECO:0000250"/>
    <property type="project" value="FlyBase"/>
</dbReference>
<dbReference type="GO" id="GO:0005216">
    <property type="term" value="F:monoatomic ion channel activity"/>
    <property type="evidence" value="ECO:0000314"/>
    <property type="project" value="FlyBase"/>
</dbReference>
<dbReference type="GO" id="GO:0015213">
    <property type="term" value="F:uridine transmembrane transporter activity"/>
    <property type="evidence" value="ECO:0000314"/>
    <property type="project" value="FlyBase"/>
</dbReference>
<dbReference type="GO" id="GO:0042592">
    <property type="term" value="P:homeostatic process"/>
    <property type="evidence" value="ECO:0000250"/>
    <property type="project" value="UniProtKB"/>
</dbReference>
<dbReference type="GO" id="GO:0000002">
    <property type="term" value="P:mitochondrial genome maintenance"/>
    <property type="evidence" value="ECO:0000250"/>
    <property type="project" value="UniProtKB"/>
</dbReference>
<dbReference type="GO" id="GO:0007005">
    <property type="term" value="P:mitochondrion organization"/>
    <property type="evidence" value="ECO:0000315"/>
    <property type="project" value="FlyBase"/>
</dbReference>
<dbReference type="GO" id="GO:0034220">
    <property type="term" value="P:monoatomic ion transmembrane transport"/>
    <property type="evidence" value="ECO:0000314"/>
    <property type="project" value="FlyBase"/>
</dbReference>
<dbReference type="GO" id="GO:1901858">
    <property type="term" value="P:regulation of mitochondrial DNA metabolic process"/>
    <property type="evidence" value="ECO:0000318"/>
    <property type="project" value="GO_Central"/>
</dbReference>
<dbReference type="GO" id="GO:0015862">
    <property type="term" value="P:uridine transmembrane transport"/>
    <property type="evidence" value="ECO:0000314"/>
    <property type="project" value="FlyBase"/>
</dbReference>
<dbReference type="InterPro" id="IPR007248">
    <property type="entry name" value="Mpv17_PMP22"/>
</dbReference>
<dbReference type="PANTHER" id="PTHR11266">
    <property type="entry name" value="PEROXISOMAL MEMBRANE PROTEIN 2, PXMP2 MPV17"/>
    <property type="match status" value="1"/>
</dbReference>
<dbReference type="PANTHER" id="PTHR11266:SF17">
    <property type="entry name" value="PROTEIN MPV17"/>
    <property type="match status" value="1"/>
</dbReference>
<dbReference type="Pfam" id="PF04117">
    <property type="entry name" value="Mpv17_PMP22"/>
    <property type="match status" value="1"/>
</dbReference>
<reference key="1">
    <citation type="journal article" date="2000" name="Science">
        <title>The genome sequence of Drosophila melanogaster.</title>
        <authorList>
            <person name="Adams M.D."/>
            <person name="Celniker S.E."/>
            <person name="Holt R.A."/>
            <person name="Evans C.A."/>
            <person name="Gocayne J.D."/>
            <person name="Amanatides P.G."/>
            <person name="Scherer S.E."/>
            <person name="Li P.W."/>
            <person name="Hoskins R.A."/>
            <person name="Galle R.F."/>
            <person name="George R.A."/>
            <person name="Lewis S.E."/>
            <person name="Richards S."/>
            <person name="Ashburner M."/>
            <person name="Henderson S.N."/>
            <person name="Sutton G.G."/>
            <person name="Wortman J.R."/>
            <person name="Yandell M.D."/>
            <person name="Zhang Q."/>
            <person name="Chen L.X."/>
            <person name="Brandon R.C."/>
            <person name="Rogers Y.-H.C."/>
            <person name="Blazej R.G."/>
            <person name="Champe M."/>
            <person name="Pfeiffer B.D."/>
            <person name="Wan K.H."/>
            <person name="Doyle C."/>
            <person name="Baxter E.G."/>
            <person name="Helt G."/>
            <person name="Nelson C.R."/>
            <person name="Miklos G.L.G."/>
            <person name="Abril J.F."/>
            <person name="Agbayani A."/>
            <person name="An H.-J."/>
            <person name="Andrews-Pfannkoch C."/>
            <person name="Baldwin D."/>
            <person name="Ballew R.M."/>
            <person name="Basu A."/>
            <person name="Baxendale J."/>
            <person name="Bayraktaroglu L."/>
            <person name="Beasley E.M."/>
            <person name="Beeson K.Y."/>
            <person name="Benos P.V."/>
            <person name="Berman B.P."/>
            <person name="Bhandari D."/>
            <person name="Bolshakov S."/>
            <person name="Borkova D."/>
            <person name="Botchan M.R."/>
            <person name="Bouck J."/>
            <person name="Brokstein P."/>
            <person name="Brottier P."/>
            <person name="Burtis K.C."/>
            <person name="Busam D.A."/>
            <person name="Butler H."/>
            <person name="Cadieu E."/>
            <person name="Center A."/>
            <person name="Chandra I."/>
            <person name="Cherry J.M."/>
            <person name="Cawley S."/>
            <person name="Dahlke C."/>
            <person name="Davenport L.B."/>
            <person name="Davies P."/>
            <person name="de Pablos B."/>
            <person name="Delcher A."/>
            <person name="Deng Z."/>
            <person name="Mays A.D."/>
            <person name="Dew I."/>
            <person name="Dietz S.M."/>
            <person name="Dodson K."/>
            <person name="Doup L.E."/>
            <person name="Downes M."/>
            <person name="Dugan-Rocha S."/>
            <person name="Dunkov B.C."/>
            <person name="Dunn P."/>
            <person name="Durbin K.J."/>
            <person name="Evangelista C.C."/>
            <person name="Ferraz C."/>
            <person name="Ferriera S."/>
            <person name="Fleischmann W."/>
            <person name="Fosler C."/>
            <person name="Gabrielian A.E."/>
            <person name="Garg N.S."/>
            <person name="Gelbart W.M."/>
            <person name="Glasser K."/>
            <person name="Glodek A."/>
            <person name="Gong F."/>
            <person name="Gorrell J.H."/>
            <person name="Gu Z."/>
            <person name="Guan P."/>
            <person name="Harris M."/>
            <person name="Harris N.L."/>
            <person name="Harvey D.A."/>
            <person name="Heiman T.J."/>
            <person name="Hernandez J.R."/>
            <person name="Houck J."/>
            <person name="Hostin D."/>
            <person name="Houston K.A."/>
            <person name="Howland T.J."/>
            <person name="Wei M.-H."/>
            <person name="Ibegwam C."/>
            <person name="Jalali M."/>
            <person name="Kalush F."/>
            <person name="Karpen G.H."/>
            <person name="Ke Z."/>
            <person name="Kennison J.A."/>
            <person name="Ketchum K.A."/>
            <person name="Kimmel B.E."/>
            <person name="Kodira C.D."/>
            <person name="Kraft C.L."/>
            <person name="Kravitz S."/>
            <person name="Kulp D."/>
            <person name="Lai Z."/>
            <person name="Lasko P."/>
            <person name="Lei Y."/>
            <person name="Levitsky A.A."/>
            <person name="Li J.H."/>
            <person name="Li Z."/>
            <person name="Liang Y."/>
            <person name="Lin X."/>
            <person name="Liu X."/>
            <person name="Mattei B."/>
            <person name="McIntosh T.C."/>
            <person name="McLeod M.P."/>
            <person name="McPherson D."/>
            <person name="Merkulov G."/>
            <person name="Milshina N.V."/>
            <person name="Mobarry C."/>
            <person name="Morris J."/>
            <person name="Moshrefi A."/>
            <person name="Mount S.M."/>
            <person name="Moy M."/>
            <person name="Murphy B."/>
            <person name="Murphy L."/>
            <person name="Muzny D.M."/>
            <person name="Nelson D.L."/>
            <person name="Nelson D.R."/>
            <person name="Nelson K.A."/>
            <person name="Nixon K."/>
            <person name="Nusskern D.R."/>
            <person name="Pacleb J.M."/>
            <person name="Palazzolo M."/>
            <person name="Pittman G.S."/>
            <person name="Pan S."/>
            <person name="Pollard J."/>
            <person name="Puri V."/>
            <person name="Reese M.G."/>
            <person name="Reinert K."/>
            <person name="Remington K."/>
            <person name="Saunders R.D.C."/>
            <person name="Scheeler F."/>
            <person name="Shen H."/>
            <person name="Shue B.C."/>
            <person name="Siden-Kiamos I."/>
            <person name="Simpson M."/>
            <person name="Skupski M.P."/>
            <person name="Smith T.J."/>
            <person name="Spier E."/>
            <person name="Spradling A.C."/>
            <person name="Stapleton M."/>
            <person name="Strong R."/>
            <person name="Sun E."/>
            <person name="Svirskas R."/>
            <person name="Tector C."/>
            <person name="Turner R."/>
            <person name="Venter E."/>
            <person name="Wang A.H."/>
            <person name="Wang X."/>
            <person name="Wang Z.-Y."/>
            <person name="Wassarman D.A."/>
            <person name="Weinstock G.M."/>
            <person name="Weissenbach J."/>
            <person name="Williams S.M."/>
            <person name="Woodage T."/>
            <person name="Worley K.C."/>
            <person name="Wu D."/>
            <person name="Yang S."/>
            <person name="Yao Q.A."/>
            <person name="Ye J."/>
            <person name="Yeh R.-F."/>
            <person name="Zaveri J.S."/>
            <person name="Zhan M."/>
            <person name="Zhang G."/>
            <person name="Zhao Q."/>
            <person name="Zheng L."/>
            <person name="Zheng X.H."/>
            <person name="Zhong F.N."/>
            <person name="Zhong W."/>
            <person name="Zhou X."/>
            <person name="Zhu S.C."/>
            <person name="Zhu X."/>
            <person name="Smith H.O."/>
            <person name="Gibbs R.A."/>
            <person name="Myers E.W."/>
            <person name="Rubin G.M."/>
            <person name="Venter J.C."/>
        </authorList>
    </citation>
    <scope>NUCLEOTIDE SEQUENCE [LARGE SCALE GENOMIC DNA]</scope>
    <source>
        <strain>Berkeley</strain>
    </source>
</reference>
<reference key="2">
    <citation type="journal article" date="2002" name="Genome Biol.">
        <title>Annotation of the Drosophila melanogaster euchromatic genome: a systematic review.</title>
        <authorList>
            <person name="Misra S."/>
            <person name="Crosby M.A."/>
            <person name="Mungall C.J."/>
            <person name="Matthews B.B."/>
            <person name="Campbell K.S."/>
            <person name="Hradecky P."/>
            <person name="Huang Y."/>
            <person name="Kaminker J.S."/>
            <person name="Millburn G.H."/>
            <person name="Prochnik S.E."/>
            <person name="Smith C.D."/>
            <person name="Tupy J.L."/>
            <person name="Whitfield E.J."/>
            <person name="Bayraktaroglu L."/>
            <person name="Berman B.P."/>
            <person name="Bettencourt B.R."/>
            <person name="Celniker S.E."/>
            <person name="de Grey A.D.N.J."/>
            <person name="Drysdale R.A."/>
            <person name="Harris N.L."/>
            <person name="Richter J."/>
            <person name="Russo S."/>
            <person name="Schroeder A.J."/>
            <person name="Shu S.Q."/>
            <person name="Stapleton M."/>
            <person name="Yamada C."/>
            <person name="Ashburner M."/>
            <person name="Gelbart W.M."/>
            <person name="Rubin G.M."/>
            <person name="Lewis S.E."/>
        </authorList>
    </citation>
    <scope>GENOME REANNOTATION</scope>
    <source>
        <strain>Berkeley</strain>
    </source>
</reference>
<reference key="3">
    <citation type="journal article" date="2002" name="Genome Biol.">
        <title>A Drosophila full-length cDNA resource.</title>
        <authorList>
            <person name="Stapleton M."/>
            <person name="Carlson J.W."/>
            <person name="Brokstein P."/>
            <person name="Yu C."/>
            <person name="Champe M."/>
            <person name="George R.A."/>
            <person name="Guarin H."/>
            <person name="Kronmiller B."/>
            <person name="Pacleb J.M."/>
            <person name="Park S."/>
            <person name="Wan K.H."/>
            <person name="Rubin G.M."/>
            <person name="Celniker S.E."/>
        </authorList>
    </citation>
    <scope>NUCLEOTIDE SEQUENCE [LARGE SCALE MRNA]</scope>
    <source>
        <strain>Berkeley</strain>
        <tissue>Embryo</tissue>
    </source>
</reference>
<reference key="4">
    <citation type="journal article" date="2022" name="Sci. Rep.">
        <title>A Drosophila model of the neurological symptoms in Mpv17-related diseases.</title>
        <authorList>
            <person name="Kodani A."/>
            <person name="Yamaguchi M."/>
            <person name="Itoh R."/>
            <person name="Huynh M.A."/>
            <person name="Yoshida H."/>
        </authorList>
    </citation>
    <scope>FUNCTION</scope>
    <scope>DISRUPTION PHENOTYPE</scope>
</reference>
<reference key="5">
    <citation type="journal article" date="2023" name="IScience">
        <title>Drosophila Mpv17 forms an ion channel and regulates energy metabolism.</title>
        <authorList>
            <person name="Corra S."/>
            <person name="Checchetto V."/>
            <person name="Brischigliaro M."/>
            <person name="Rampazzo C."/>
            <person name="Bottani E."/>
            <person name="Gagliani C."/>
            <person name="Cortese K."/>
            <person name="De Pitta C."/>
            <person name="Roverso M."/>
            <person name="De Stefani D."/>
            <person name="Bogialli S."/>
            <person name="Zeviani M."/>
            <person name="Viscomi C."/>
            <person name="Szabo I."/>
            <person name="Costa R."/>
        </authorList>
    </citation>
    <scope>FUNCTION</scope>
    <scope>SUBUNIT</scope>
    <scope>SUBCELLULAR LOCATION</scope>
    <scope>DISRUPTION PHENOTYPE</scope>
    <scope>MUTAGENESIS OF ARG-41 AND SER-163</scope>
</reference>
<sequence length="168" mass="19521">MKRLKAYLKDGINVAAVMCLGDTISQFFFDKKSLDEWDAGRTLRFGIVGLVFVGPTLRRWYHFLESRVPKTYSPMRRGVTKMLVDQTLFAPPFTMAMSFLVPLSNGEPIDRIRQRILDSYLSILVRNYMLWPAAQMLNFRFVPLGYQVLYAQFIALVWNCYLSMILNS</sequence>
<comment type="function">
    <text evidence="3 4">Non-selective channel that modulates the membrane potential under normal conditions and oxidative stress, and is involved in mitochondrial homeostasis (PubMed:37810222). Can translocate uridine, but not orotate, across a lipid membrane (PubMed:37810222). Involved in maintenance of mitochondrial ultrastructure (PubMed:37810222). May be involved in mitochondrial DNA (mtDNA) maintenance but does not appear to be directly involved in mitochondrial deoxynucleoside triphosphate (dNTP) pool homeostasis (PubMed:37810222). May be involved in the regulation of reactive oxygen species metabolism and the control of oxidative phosphorylation (PubMed:36587049).</text>
</comment>
<comment type="subunit">
    <text evidence="4">Part of a larger complex that may be a homohexamer.</text>
</comment>
<comment type="subcellular location">
    <subcellularLocation>
        <location evidence="4">Mitochondrion inner membrane</location>
        <topology evidence="2">Multi-pass membrane protein</topology>
    </subcellularLocation>
</comment>
<comment type="disruption phenotype">
    <text evidence="3 4">No effect on lifespan under normal conditions but reduced lifespan under stress conditions such as starvation; adult flies show an increase in glycolytic flux (PubMed:37810222). Reduced mitochondrial DNA copy number in the fat body, but not in skeletal muscle (PubMed:37810222). Mitochondria in the fat body appear swollen and lack inner membrane cristae (PubMed:37810222). Conditional RNAi-mediated knockdown in neuronal tissues results in significant defects in learning and locomotor functions in larvae but no defects in adults (PubMed:36587049). These larvae have impaired mitochondrial function with decreased ATP production, increased levels of reactive oxygen species and evidence of lactic acidosis in the central nervous system (PubMed:36587049). Third instar larvae have abnormal neuromuscular junction morphology (PubMed:36587049).</text>
</comment>
<comment type="similarity">
    <text evidence="7">Belongs to the peroxisomal membrane protein PXMP2/4 family.</text>
</comment>
<protein>
    <recommendedName>
        <fullName evidence="8">Mitochondrial inner membrane protein Mpv17</fullName>
    </recommendedName>
    <alternativeName>
        <fullName evidence="7">Mpv17-like protein</fullName>
        <shortName evidence="5 6">dMpv17</shortName>
    </alternativeName>
</protein>
<name>MPV17_DROME</name>
<accession>Q9V492</accession>
<organism evidence="9">
    <name type="scientific">Drosophila melanogaster</name>
    <name type="common">Fruit fly</name>
    <dbReference type="NCBI Taxonomy" id="7227"/>
    <lineage>
        <taxon>Eukaryota</taxon>
        <taxon>Metazoa</taxon>
        <taxon>Ecdysozoa</taxon>
        <taxon>Arthropoda</taxon>
        <taxon>Hexapoda</taxon>
        <taxon>Insecta</taxon>
        <taxon>Pterygota</taxon>
        <taxon>Neoptera</taxon>
        <taxon>Endopterygota</taxon>
        <taxon>Diptera</taxon>
        <taxon>Brachycera</taxon>
        <taxon>Muscomorpha</taxon>
        <taxon>Ephydroidea</taxon>
        <taxon>Drosophilidae</taxon>
        <taxon>Drosophila</taxon>
        <taxon>Sophophora</taxon>
    </lineage>
</organism>